<protein>
    <recommendedName>
        <fullName evidence="1">ATP-dependent protease subunit HslV</fullName>
        <ecNumber evidence="1">3.4.25.2</ecNumber>
    </recommendedName>
    <alternativeName>
        <fullName evidence="1">Heat shock protein HslV</fullName>
    </alternativeName>
</protein>
<organism>
    <name type="scientific">Escherichia coli O139:H28 (strain E24377A / ETEC)</name>
    <dbReference type="NCBI Taxonomy" id="331111"/>
    <lineage>
        <taxon>Bacteria</taxon>
        <taxon>Pseudomonadati</taxon>
        <taxon>Pseudomonadota</taxon>
        <taxon>Gammaproteobacteria</taxon>
        <taxon>Enterobacterales</taxon>
        <taxon>Enterobacteriaceae</taxon>
        <taxon>Escherichia</taxon>
    </lineage>
</organism>
<comment type="function">
    <text evidence="1">Protease subunit of a proteasome-like degradation complex believed to be a general protein degrading machinery.</text>
</comment>
<comment type="catalytic activity">
    <reaction evidence="1">
        <text>ATP-dependent cleavage of peptide bonds with broad specificity.</text>
        <dbReference type="EC" id="3.4.25.2"/>
    </reaction>
</comment>
<comment type="activity regulation">
    <text evidence="1">Allosterically activated by HslU binding.</text>
</comment>
<comment type="subunit">
    <text evidence="1">A double ring-shaped homohexamer of HslV is capped on each side by a ring-shaped HslU homohexamer. The assembly of the HslU/HslV complex is dependent on binding of ATP.</text>
</comment>
<comment type="subcellular location">
    <subcellularLocation>
        <location evidence="1">Cytoplasm</location>
    </subcellularLocation>
</comment>
<comment type="induction">
    <text evidence="1">By heat shock.</text>
</comment>
<comment type="similarity">
    <text evidence="1">Belongs to the peptidase T1B family. HslV subfamily.</text>
</comment>
<name>HSLV_ECO24</name>
<accession>A7ZUE7</accession>
<evidence type="ECO:0000255" key="1">
    <source>
        <dbReference type="HAMAP-Rule" id="MF_00248"/>
    </source>
</evidence>
<proteinExistence type="inferred from homology"/>
<sequence>MTTIVSVRRNGHVVIAGDGQATLGNTVMKGNVKKVRRLYNDKVIAGFAGGTADAFTLFELFERKLEMHQGHLVKAAVELAKDWRTDRMLRKLEALLAVADETASLIITGNGDVVQPENDLIAIGSGGPYAQAAARALLENTELSAREIAEKALDIAGDICIYTNHFHTIEELSYKA</sequence>
<gene>
    <name evidence="1" type="primary">hslV</name>
    <name type="ordered locus">EcE24377A_4468</name>
</gene>
<keyword id="KW-0021">Allosteric enzyme</keyword>
<keyword id="KW-0963">Cytoplasm</keyword>
<keyword id="KW-0378">Hydrolase</keyword>
<keyword id="KW-0479">Metal-binding</keyword>
<keyword id="KW-0645">Protease</keyword>
<keyword id="KW-1185">Reference proteome</keyword>
<keyword id="KW-0915">Sodium</keyword>
<keyword id="KW-0346">Stress response</keyword>
<keyword id="KW-0888">Threonine protease</keyword>
<dbReference type="EC" id="3.4.25.2" evidence="1"/>
<dbReference type="EMBL" id="CP000800">
    <property type="protein sequence ID" value="ABV21032.1"/>
    <property type="molecule type" value="Genomic_DNA"/>
</dbReference>
<dbReference type="RefSeq" id="WP_000208242.1">
    <property type="nucleotide sequence ID" value="NC_009801.1"/>
</dbReference>
<dbReference type="SMR" id="A7ZUE7"/>
<dbReference type="MEROPS" id="T01.006"/>
<dbReference type="GeneID" id="93777966"/>
<dbReference type="KEGG" id="ecw:EcE24377A_4468"/>
<dbReference type="HOGENOM" id="CLU_093872_1_0_6"/>
<dbReference type="Proteomes" id="UP000001122">
    <property type="component" value="Chromosome"/>
</dbReference>
<dbReference type="GO" id="GO:0009376">
    <property type="term" value="C:HslUV protease complex"/>
    <property type="evidence" value="ECO:0007669"/>
    <property type="project" value="UniProtKB-UniRule"/>
</dbReference>
<dbReference type="GO" id="GO:0005839">
    <property type="term" value="C:proteasome core complex"/>
    <property type="evidence" value="ECO:0007669"/>
    <property type="project" value="InterPro"/>
</dbReference>
<dbReference type="GO" id="GO:0046872">
    <property type="term" value="F:metal ion binding"/>
    <property type="evidence" value="ECO:0007669"/>
    <property type="project" value="UniProtKB-KW"/>
</dbReference>
<dbReference type="GO" id="GO:0004298">
    <property type="term" value="F:threonine-type endopeptidase activity"/>
    <property type="evidence" value="ECO:0007669"/>
    <property type="project" value="UniProtKB-KW"/>
</dbReference>
<dbReference type="GO" id="GO:0051603">
    <property type="term" value="P:proteolysis involved in protein catabolic process"/>
    <property type="evidence" value="ECO:0007669"/>
    <property type="project" value="InterPro"/>
</dbReference>
<dbReference type="CDD" id="cd01913">
    <property type="entry name" value="protease_HslV"/>
    <property type="match status" value="1"/>
</dbReference>
<dbReference type="FunFam" id="3.60.20.10:FF:000002">
    <property type="entry name" value="ATP-dependent protease subunit HslV"/>
    <property type="match status" value="1"/>
</dbReference>
<dbReference type="Gene3D" id="3.60.20.10">
    <property type="entry name" value="Glutamine Phosphoribosylpyrophosphate, subunit 1, domain 1"/>
    <property type="match status" value="1"/>
</dbReference>
<dbReference type="HAMAP" id="MF_00248">
    <property type="entry name" value="HslV"/>
    <property type="match status" value="1"/>
</dbReference>
<dbReference type="InterPro" id="IPR022281">
    <property type="entry name" value="ATP-dep_Prtase_HsIV_su"/>
</dbReference>
<dbReference type="InterPro" id="IPR029055">
    <property type="entry name" value="Ntn_hydrolases_N"/>
</dbReference>
<dbReference type="InterPro" id="IPR001353">
    <property type="entry name" value="Proteasome_sua/b"/>
</dbReference>
<dbReference type="InterPro" id="IPR023333">
    <property type="entry name" value="Proteasome_suB-type"/>
</dbReference>
<dbReference type="NCBIfam" id="TIGR03692">
    <property type="entry name" value="ATP_dep_HslV"/>
    <property type="match status" value="1"/>
</dbReference>
<dbReference type="NCBIfam" id="NF003964">
    <property type="entry name" value="PRK05456.1"/>
    <property type="match status" value="1"/>
</dbReference>
<dbReference type="PANTHER" id="PTHR32194:SF0">
    <property type="entry name" value="ATP-DEPENDENT PROTEASE SUBUNIT HSLV"/>
    <property type="match status" value="1"/>
</dbReference>
<dbReference type="PANTHER" id="PTHR32194">
    <property type="entry name" value="METALLOPROTEASE TLDD"/>
    <property type="match status" value="1"/>
</dbReference>
<dbReference type="Pfam" id="PF00227">
    <property type="entry name" value="Proteasome"/>
    <property type="match status" value="1"/>
</dbReference>
<dbReference type="PIRSF" id="PIRSF039093">
    <property type="entry name" value="HslV"/>
    <property type="match status" value="1"/>
</dbReference>
<dbReference type="SUPFAM" id="SSF56235">
    <property type="entry name" value="N-terminal nucleophile aminohydrolases (Ntn hydrolases)"/>
    <property type="match status" value="1"/>
</dbReference>
<dbReference type="PROSITE" id="PS51476">
    <property type="entry name" value="PROTEASOME_BETA_2"/>
    <property type="match status" value="1"/>
</dbReference>
<reference key="1">
    <citation type="journal article" date="2008" name="J. Bacteriol.">
        <title>The pangenome structure of Escherichia coli: comparative genomic analysis of E. coli commensal and pathogenic isolates.</title>
        <authorList>
            <person name="Rasko D.A."/>
            <person name="Rosovitz M.J."/>
            <person name="Myers G.S.A."/>
            <person name="Mongodin E.F."/>
            <person name="Fricke W.F."/>
            <person name="Gajer P."/>
            <person name="Crabtree J."/>
            <person name="Sebaihia M."/>
            <person name="Thomson N.R."/>
            <person name="Chaudhuri R."/>
            <person name="Henderson I.R."/>
            <person name="Sperandio V."/>
            <person name="Ravel J."/>
        </authorList>
    </citation>
    <scope>NUCLEOTIDE SEQUENCE [LARGE SCALE GENOMIC DNA]</scope>
    <source>
        <strain>E24377A / ETEC</strain>
    </source>
</reference>
<feature type="chain" id="PRO_1000059015" description="ATP-dependent protease subunit HslV">
    <location>
        <begin position="1"/>
        <end position="176"/>
    </location>
</feature>
<feature type="active site" evidence="1">
    <location>
        <position position="2"/>
    </location>
</feature>
<feature type="binding site" evidence="1">
    <location>
        <position position="157"/>
    </location>
    <ligand>
        <name>Na(+)</name>
        <dbReference type="ChEBI" id="CHEBI:29101"/>
    </ligand>
</feature>
<feature type="binding site" evidence="1">
    <location>
        <position position="160"/>
    </location>
    <ligand>
        <name>Na(+)</name>
        <dbReference type="ChEBI" id="CHEBI:29101"/>
    </ligand>
</feature>
<feature type="binding site" evidence="1">
    <location>
        <position position="163"/>
    </location>
    <ligand>
        <name>Na(+)</name>
        <dbReference type="ChEBI" id="CHEBI:29101"/>
    </ligand>
</feature>